<organism>
    <name type="scientific">Danio rerio</name>
    <name type="common">Zebrafish</name>
    <name type="synonym">Brachydanio rerio</name>
    <dbReference type="NCBI Taxonomy" id="7955"/>
    <lineage>
        <taxon>Eukaryota</taxon>
        <taxon>Metazoa</taxon>
        <taxon>Chordata</taxon>
        <taxon>Craniata</taxon>
        <taxon>Vertebrata</taxon>
        <taxon>Euteleostomi</taxon>
        <taxon>Actinopterygii</taxon>
        <taxon>Neopterygii</taxon>
        <taxon>Teleostei</taxon>
        <taxon>Ostariophysi</taxon>
        <taxon>Cypriniformes</taxon>
        <taxon>Danionidae</taxon>
        <taxon>Danioninae</taxon>
        <taxon>Danio</taxon>
    </lineage>
</organism>
<accession>Q90477</accession>
<accession>Q29RD1</accession>
<accession>Q98TY7</accession>
<name>MYOD1_DANRE</name>
<proteinExistence type="evidence at protein level"/>
<sequence>MELSDIPFPIPSADDFYDDPCFNTNDMHFFEDLDPRLVHVSLLKPDEHHHIEDEHVRAPSGHHQAGRCLLWACKACKRKTTNADRRKAATMRERRRLSKVNDAFETLKRCTSTNPNQRLPKVEILRNAISYIESLQALLRSQEDNYYPVLEHYSGDSDASSPRSNCSDGMMDFMGPTCQTRRRNSYDSSYFNDTPNADARNNKNSVVSSLDCLSSIVERISTETPACPVLSVPEGHEESPCSPHEGSVLSDTGTTAPSPTSCPQQQAQETIYQVL</sequence>
<feature type="chain" id="PRO_0000127367" description="Myoblast determination protein 1 homolog">
    <location>
        <begin position="1"/>
        <end position="275"/>
    </location>
</feature>
<feature type="domain" description="bHLH" evidence="2">
    <location>
        <begin position="84"/>
        <end position="135"/>
    </location>
</feature>
<feature type="region of interest" description="Disordered" evidence="3">
    <location>
        <begin position="234"/>
        <end position="275"/>
    </location>
</feature>
<feature type="compositionally biased region" description="Polar residues" evidence="3">
    <location>
        <begin position="249"/>
        <end position="275"/>
    </location>
</feature>
<feature type="sequence conflict" description="In Ref. 1; CAA85407." evidence="6" ref="1">
    <original>L</original>
    <variation>M</variation>
    <location>
        <position position="150"/>
    </location>
</feature>
<feature type="sequence conflict" description="In Ref. 2; AAK06755." evidence="6" ref="2">
    <original>M</original>
    <variation>I</variation>
    <location>
        <position position="170"/>
    </location>
</feature>
<feature type="sequence conflict" description="In Ref. 1; CAA85407." evidence="6" ref="1">
    <original>T</original>
    <variation>A</variation>
    <location>
        <position position="194"/>
    </location>
</feature>
<feature type="sequence conflict" description="In Ref. 1; CAA85407." evidence="6" ref="1">
    <original>G</original>
    <variation>A</variation>
    <location>
        <position position="235"/>
    </location>
</feature>
<feature type="sequence conflict" description="In Ref. 1; CAA85407." evidence="6" ref="1">
    <original>E</original>
    <variation>G</variation>
    <location>
        <position position="238"/>
    </location>
</feature>
<reference key="1">
    <citation type="journal article" date="1996" name="Development">
        <title>Developmental regulation of zebrafish MyoD in wild-type, no tail and spadetail embryos.</title>
        <authorList>
            <person name="Weinberg E.S."/>
            <person name="Allende M.L."/>
            <person name="Kelly C.S."/>
            <person name="Abdelhamid A."/>
            <person name="Murakami T."/>
            <person name="Andermann P."/>
            <person name="Doerre O.G."/>
            <person name="Grunwald D.J."/>
            <person name="Riggleman B."/>
        </authorList>
    </citation>
    <scope>NUCLEOTIDE SEQUENCE [MRNA]</scope>
    <scope>TISSUE SPECIFICITY</scope>
</reference>
<reference key="2">
    <citation type="journal article" date="2003" name="Comp. Biochem. Physiol.">
        <title>Muscle-specific expression of myogenin in zebrafish embryos is controlled by multiple regulatory elements in the promoter.</title>
        <authorList>
            <person name="Du S.J."/>
            <person name="Gao J."/>
            <person name="Anyangwe V."/>
        </authorList>
    </citation>
    <scope>NUCLEOTIDE SEQUENCE [GENOMIC DNA]</scope>
    <scope>TISSUE SPECIFICITY</scope>
</reference>
<reference key="3">
    <citation type="submission" date="2006-03" db="EMBL/GenBank/DDBJ databases">
        <authorList>
            <consortium name="NIH - Zebrafish Gene Collection (ZGC) project"/>
        </authorList>
    </citation>
    <scope>NUCLEOTIDE SEQUENCE [LARGE SCALE MRNA]</scope>
</reference>
<evidence type="ECO:0000250" key="1"/>
<evidence type="ECO:0000255" key="2">
    <source>
        <dbReference type="PROSITE-ProRule" id="PRU00981"/>
    </source>
</evidence>
<evidence type="ECO:0000256" key="3">
    <source>
        <dbReference type="SAM" id="MobiDB-lite"/>
    </source>
</evidence>
<evidence type="ECO:0000269" key="4">
    <source>
    </source>
</evidence>
<evidence type="ECO:0000269" key="5">
    <source>
    </source>
</evidence>
<evidence type="ECO:0000305" key="6"/>
<gene>
    <name type="primary">myod1</name>
    <name type="synonym">myod</name>
</gene>
<dbReference type="EMBL" id="Z36945">
    <property type="protein sequence ID" value="CAA85407.1"/>
    <property type="molecule type" value="mRNA"/>
</dbReference>
<dbReference type="EMBL" id="AF318503">
    <property type="protein sequence ID" value="AAK06755.1"/>
    <property type="molecule type" value="Genomic_DNA"/>
</dbReference>
<dbReference type="EMBL" id="BC114261">
    <property type="protein sequence ID" value="AAI14262.1"/>
    <property type="molecule type" value="mRNA"/>
</dbReference>
<dbReference type="PIR" id="S47325">
    <property type="entry name" value="S47325"/>
</dbReference>
<dbReference type="RefSeq" id="NP_571337.2">
    <property type="nucleotide sequence ID" value="NM_131262.2"/>
</dbReference>
<dbReference type="SMR" id="Q90477"/>
<dbReference type="DIP" id="DIP-59871N"/>
<dbReference type="FunCoup" id="Q90477">
    <property type="interactions" value="182"/>
</dbReference>
<dbReference type="IntAct" id="Q90477">
    <property type="interactions" value="3"/>
</dbReference>
<dbReference type="STRING" id="7955.ENSDARP00000009713"/>
<dbReference type="PaxDb" id="7955-ENSDARP00000009713"/>
<dbReference type="Ensembl" id="ENSDART00000027661">
    <property type="protein sequence ID" value="ENSDARP00000009713"/>
    <property type="gene ID" value="ENSDARG00000030110"/>
</dbReference>
<dbReference type="GeneID" id="30513"/>
<dbReference type="KEGG" id="dre:30513"/>
<dbReference type="AGR" id="ZFIN:ZDB-GENE-980526-561"/>
<dbReference type="CTD" id="4654"/>
<dbReference type="ZFIN" id="ZDB-GENE-980526-561">
    <property type="gene designation" value="myod1"/>
</dbReference>
<dbReference type="eggNOG" id="KOG3960">
    <property type="taxonomic scope" value="Eukaryota"/>
</dbReference>
<dbReference type="HOGENOM" id="CLU_066887_0_0_1"/>
<dbReference type="InParanoid" id="Q90477"/>
<dbReference type="OMA" id="FYERGST"/>
<dbReference type="OrthoDB" id="10049614at2759"/>
<dbReference type="PhylomeDB" id="Q90477"/>
<dbReference type="TreeFam" id="TF316344"/>
<dbReference type="Reactome" id="R-DRE-525793">
    <property type="pathway name" value="Myogenesis"/>
</dbReference>
<dbReference type="PRO" id="PR:Q90477"/>
<dbReference type="Proteomes" id="UP000000437">
    <property type="component" value="Chromosome 25"/>
</dbReference>
<dbReference type="Bgee" id="ENSDARG00000030110">
    <property type="expression patterns" value="Expressed in adaxial cell (Danio) and 80 other cell types or tissues"/>
</dbReference>
<dbReference type="GO" id="GO:0005634">
    <property type="term" value="C:nucleus"/>
    <property type="evidence" value="ECO:0000314"/>
    <property type="project" value="ZFIN"/>
</dbReference>
<dbReference type="GO" id="GO:0001216">
    <property type="term" value="F:DNA-binding transcription activator activity"/>
    <property type="evidence" value="ECO:0000250"/>
    <property type="project" value="UniProtKB"/>
</dbReference>
<dbReference type="GO" id="GO:0000981">
    <property type="term" value="F:DNA-binding transcription factor activity, RNA polymerase II-specific"/>
    <property type="evidence" value="ECO:0000318"/>
    <property type="project" value="GO_Central"/>
</dbReference>
<dbReference type="GO" id="GO:0070888">
    <property type="term" value="F:E-box binding"/>
    <property type="evidence" value="ECO:0000250"/>
    <property type="project" value="UniProtKB"/>
</dbReference>
<dbReference type="GO" id="GO:1990841">
    <property type="term" value="F:promoter-specific chromatin binding"/>
    <property type="evidence" value="ECO:0000250"/>
    <property type="project" value="UniProtKB"/>
</dbReference>
<dbReference type="GO" id="GO:0046983">
    <property type="term" value="F:protein dimerization activity"/>
    <property type="evidence" value="ECO:0007669"/>
    <property type="project" value="InterPro"/>
</dbReference>
<dbReference type="GO" id="GO:0000978">
    <property type="term" value="F:RNA polymerase II cis-regulatory region sequence-specific DNA binding"/>
    <property type="evidence" value="ECO:0000318"/>
    <property type="project" value="GO_Central"/>
</dbReference>
<dbReference type="GO" id="GO:0071392">
    <property type="term" value="P:cellular response to estradiol stimulus"/>
    <property type="evidence" value="ECO:0000250"/>
    <property type="project" value="UniProtKB"/>
</dbReference>
<dbReference type="GO" id="GO:0043282">
    <property type="term" value="P:chordate pharyngeal muscle development"/>
    <property type="evidence" value="ECO:0000315"/>
    <property type="project" value="ZFIN"/>
</dbReference>
<dbReference type="GO" id="GO:0002074">
    <property type="term" value="P:extraocular skeletal muscle development"/>
    <property type="evidence" value="ECO:0000315"/>
    <property type="project" value="ZFIN"/>
</dbReference>
<dbReference type="GO" id="GO:0007517">
    <property type="term" value="P:muscle organ development"/>
    <property type="evidence" value="ECO:0000315"/>
    <property type="project" value="ZFIN"/>
</dbReference>
<dbReference type="GO" id="GO:0045663">
    <property type="term" value="P:positive regulation of myoblast differentiation"/>
    <property type="evidence" value="ECO:0000318"/>
    <property type="project" value="GO_Central"/>
</dbReference>
<dbReference type="GO" id="GO:0048743">
    <property type="term" value="P:positive regulation of skeletal muscle fiber development"/>
    <property type="evidence" value="ECO:0000318"/>
    <property type="project" value="GO_Central"/>
</dbReference>
<dbReference type="GO" id="GO:1905382">
    <property type="term" value="P:positive regulation of snRNA transcription by RNA polymerase II"/>
    <property type="evidence" value="ECO:0000250"/>
    <property type="project" value="UniProtKB"/>
</dbReference>
<dbReference type="GO" id="GO:0045944">
    <property type="term" value="P:positive regulation of transcription by RNA polymerase II"/>
    <property type="evidence" value="ECO:0000250"/>
    <property type="project" value="UniProtKB"/>
</dbReference>
<dbReference type="GO" id="GO:0006357">
    <property type="term" value="P:regulation of transcription by RNA polymerase II"/>
    <property type="evidence" value="ECO:0000318"/>
    <property type="project" value="GO_Central"/>
</dbReference>
<dbReference type="GO" id="GO:0035914">
    <property type="term" value="P:skeletal muscle cell differentiation"/>
    <property type="evidence" value="ECO:0000316"/>
    <property type="project" value="ZFIN"/>
</dbReference>
<dbReference type="GO" id="GO:0048741">
    <property type="term" value="P:skeletal muscle fiber development"/>
    <property type="evidence" value="ECO:0000315"/>
    <property type="project" value="ZFIN"/>
</dbReference>
<dbReference type="GO" id="GO:0007519">
    <property type="term" value="P:skeletal muscle tissue development"/>
    <property type="evidence" value="ECO:0000316"/>
    <property type="project" value="ZFIN"/>
</dbReference>
<dbReference type="GO" id="GO:0055002">
    <property type="term" value="P:striated muscle cell development"/>
    <property type="evidence" value="ECO:0000316"/>
    <property type="project" value="ZFIN"/>
</dbReference>
<dbReference type="CDD" id="cd18936">
    <property type="entry name" value="bHLH_TS_MYOD1_Myf3"/>
    <property type="match status" value="1"/>
</dbReference>
<dbReference type="FunFam" id="4.10.280.10:FF:000005">
    <property type="entry name" value="Myogenic factor"/>
    <property type="match status" value="1"/>
</dbReference>
<dbReference type="Gene3D" id="4.10.280.10">
    <property type="entry name" value="Helix-loop-helix DNA-binding domain"/>
    <property type="match status" value="1"/>
</dbReference>
<dbReference type="InterPro" id="IPR011598">
    <property type="entry name" value="bHLH_dom"/>
</dbReference>
<dbReference type="InterPro" id="IPR036638">
    <property type="entry name" value="HLH_DNA-bd_sf"/>
</dbReference>
<dbReference type="InterPro" id="IPR022032">
    <property type="entry name" value="Myf5"/>
</dbReference>
<dbReference type="InterPro" id="IPR002546">
    <property type="entry name" value="MyoD_N"/>
</dbReference>
<dbReference type="InterPro" id="IPR039704">
    <property type="entry name" value="Myogenic_factor"/>
</dbReference>
<dbReference type="PANTHER" id="PTHR11534:SF2">
    <property type="entry name" value="MYOBLAST DETERMINATION PROTEIN 1"/>
    <property type="match status" value="1"/>
</dbReference>
<dbReference type="PANTHER" id="PTHR11534">
    <property type="entry name" value="MYOGENIC FACTOR"/>
    <property type="match status" value="1"/>
</dbReference>
<dbReference type="Pfam" id="PF01586">
    <property type="entry name" value="Basic"/>
    <property type="match status" value="1"/>
</dbReference>
<dbReference type="Pfam" id="PF00010">
    <property type="entry name" value="HLH"/>
    <property type="match status" value="1"/>
</dbReference>
<dbReference type="Pfam" id="PF12232">
    <property type="entry name" value="Myf5"/>
    <property type="match status" value="1"/>
</dbReference>
<dbReference type="SMART" id="SM00520">
    <property type="entry name" value="BASIC"/>
    <property type="match status" value="1"/>
</dbReference>
<dbReference type="SMART" id="SM00353">
    <property type="entry name" value="HLH"/>
    <property type="match status" value="1"/>
</dbReference>
<dbReference type="SUPFAM" id="SSF47459">
    <property type="entry name" value="HLH, helix-loop-helix DNA-binding domain"/>
    <property type="match status" value="1"/>
</dbReference>
<dbReference type="PROSITE" id="PS50888">
    <property type="entry name" value="BHLH"/>
    <property type="match status" value="1"/>
</dbReference>
<comment type="function">
    <text evidence="1">May act as a transcriptional activator that promotes transcription of muscle-specific target genes and plays a role in muscle differentiation.</text>
</comment>
<comment type="subunit">
    <text>Efficient DNA binding requires dimerization with another bHLH protein.</text>
</comment>
<comment type="interaction">
    <interactant intactId="EBI-16009646">
        <id>Q90477</id>
    </interactant>
    <interactant intactId="EBI-16009629">
        <id>Q90463</id>
        <label>her1</label>
    </interactant>
    <organismsDiffer>false</organismsDiffer>
    <experiments>2</experiments>
</comment>
<comment type="interaction">
    <interactant intactId="EBI-16009646">
        <id>Q90477</id>
    </interactant>
    <interactant intactId="EBI-16009727">
        <id>Q9I9K1</id>
        <label>her7</label>
    </interactant>
    <organismsDiffer>false</organismsDiffer>
    <experiments>2</experiments>
</comment>
<comment type="interaction">
    <interactant intactId="EBI-16009646">
        <id>Q90477</id>
    </interactant>
    <interactant intactId="EBI-16009592">
        <id>Q6P0J1</id>
        <label>hes6</label>
    </interactant>
    <organismsDiffer>false</organismsDiffer>
    <experiments>2</experiments>
</comment>
<comment type="subcellular location">
    <subcellularLocation>
        <location>Nucleus</location>
    </subcellularLocation>
</comment>
<comment type="tissue specificity">
    <text evidence="4 5">From mid-gastrula to just before somite formation, expressed in cells adjacent to axial mesoderm. Subsequently, during the anterior-to-posterior wave of somite formation and maturation, expressed within particular regions of each somite. Expressed in both muscle and non-muscle cells.</text>
</comment>
<keyword id="KW-0010">Activator</keyword>
<keyword id="KW-0217">Developmental protein</keyword>
<keyword id="KW-0221">Differentiation</keyword>
<keyword id="KW-0238">DNA-binding</keyword>
<keyword id="KW-0517">Myogenesis</keyword>
<keyword id="KW-0539">Nucleus</keyword>
<keyword id="KW-1185">Reference proteome</keyword>
<keyword id="KW-0804">Transcription</keyword>
<keyword id="KW-0805">Transcription regulation</keyword>
<protein>
    <recommendedName>
        <fullName>Myoblast determination protein 1 homolog</fullName>
    </recommendedName>
    <alternativeName>
        <fullName>Myogenic factor 1</fullName>
    </alternativeName>
</protein>